<organism>
    <name type="scientific">Burkholderia vietnamiensis (strain G4 / LMG 22486)</name>
    <name type="common">Burkholderia cepacia (strain R1808)</name>
    <dbReference type="NCBI Taxonomy" id="269482"/>
    <lineage>
        <taxon>Bacteria</taxon>
        <taxon>Pseudomonadati</taxon>
        <taxon>Pseudomonadota</taxon>
        <taxon>Betaproteobacteria</taxon>
        <taxon>Burkholderiales</taxon>
        <taxon>Burkholderiaceae</taxon>
        <taxon>Burkholderia</taxon>
        <taxon>Burkholderia cepacia complex</taxon>
    </lineage>
</organism>
<keyword id="KW-0067">ATP-binding</keyword>
<keyword id="KW-0378">Hydrolase</keyword>
<keyword id="KW-0460">Magnesium</keyword>
<keyword id="KW-0479">Metal-binding</keyword>
<keyword id="KW-0511">Multifunctional enzyme</keyword>
<keyword id="KW-0533">Nickel</keyword>
<keyword id="KW-0547">Nucleotide-binding</keyword>
<keyword id="KW-0548">Nucleotidyltransferase</keyword>
<keyword id="KW-0692">RNA repair</keyword>
<keyword id="KW-0694">RNA-binding</keyword>
<keyword id="KW-0808">Transferase</keyword>
<keyword id="KW-0819">tRNA processing</keyword>
<evidence type="ECO:0000255" key="1">
    <source>
        <dbReference type="HAMAP-Rule" id="MF_01261"/>
    </source>
</evidence>
<comment type="function">
    <text evidence="1">Catalyzes the addition and repair of the essential 3'-terminal CCA sequence in tRNAs without using a nucleic acid template. Adds these three nucleotides in the order of C, C, and A to the tRNA nucleotide-73, using CTP and ATP as substrates and producing inorganic pyrophosphate. tRNA 3'-terminal CCA addition is required both for tRNA processing and repair. Also involved in tRNA surveillance by mediating tandem CCA addition to generate a CCACCA at the 3' terminus of unstable tRNAs. While stable tRNAs receive only 3'-terminal CCA, unstable tRNAs are marked with CCACCA and rapidly degraded.</text>
</comment>
<comment type="catalytic activity">
    <reaction evidence="1">
        <text>a tRNA precursor + 2 CTP + ATP = a tRNA with a 3' CCA end + 3 diphosphate</text>
        <dbReference type="Rhea" id="RHEA:14433"/>
        <dbReference type="Rhea" id="RHEA-COMP:10465"/>
        <dbReference type="Rhea" id="RHEA-COMP:10468"/>
        <dbReference type="ChEBI" id="CHEBI:30616"/>
        <dbReference type="ChEBI" id="CHEBI:33019"/>
        <dbReference type="ChEBI" id="CHEBI:37563"/>
        <dbReference type="ChEBI" id="CHEBI:74896"/>
        <dbReference type="ChEBI" id="CHEBI:83071"/>
        <dbReference type="EC" id="2.7.7.72"/>
    </reaction>
</comment>
<comment type="catalytic activity">
    <reaction evidence="1">
        <text>a tRNA with a 3' CCA end + 2 CTP + ATP = a tRNA with a 3' CCACCA end + 3 diphosphate</text>
        <dbReference type="Rhea" id="RHEA:76235"/>
        <dbReference type="Rhea" id="RHEA-COMP:10468"/>
        <dbReference type="Rhea" id="RHEA-COMP:18655"/>
        <dbReference type="ChEBI" id="CHEBI:30616"/>
        <dbReference type="ChEBI" id="CHEBI:33019"/>
        <dbReference type="ChEBI" id="CHEBI:37563"/>
        <dbReference type="ChEBI" id="CHEBI:83071"/>
        <dbReference type="ChEBI" id="CHEBI:195187"/>
    </reaction>
    <physiologicalReaction direction="left-to-right" evidence="1">
        <dbReference type="Rhea" id="RHEA:76236"/>
    </physiologicalReaction>
</comment>
<comment type="cofactor">
    <cofactor evidence="1">
        <name>Mg(2+)</name>
        <dbReference type="ChEBI" id="CHEBI:18420"/>
    </cofactor>
    <text evidence="1">Magnesium is required for nucleotidyltransferase activity.</text>
</comment>
<comment type="cofactor">
    <cofactor evidence="1">
        <name>Ni(2+)</name>
        <dbReference type="ChEBI" id="CHEBI:49786"/>
    </cofactor>
    <text evidence="1">Nickel for phosphatase activity.</text>
</comment>
<comment type="subunit">
    <text evidence="1">Monomer. Can also form homodimers and oligomers.</text>
</comment>
<comment type="domain">
    <text evidence="1">Comprises two domains: an N-terminal domain containing the nucleotidyltransferase activity and a C-terminal HD domain associated with both phosphodiesterase and phosphatase activities.</text>
</comment>
<comment type="miscellaneous">
    <text evidence="1">A single active site specifically recognizes both ATP and CTP and is responsible for their addition.</text>
</comment>
<comment type="similarity">
    <text evidence="1">Belongs to the tRNA nucleotidyltransferase/poly(A) polymerase family. Bacterial CCA-adding enzyme type 1 subfamily.</text>
</comment>
<feature type="chain" id="PRO_1000054259" description="Multifunctional CCA protein">
    <location>
        <begin position="1"/>
        <end position="413"/>
    </location>
</feature>
<feature type="domain" description="HD" evidence="1">
    <location>
        <begin position="232"/>
        <end position="333"/>
    </location>
</feature>
<feature type="binding site" evidence="1">
    <location>
        <position position="8"/>
    </location>
    <ligand>
        <name>ATP</name>
        <dbReference type="ChEBI" id="CHEBI:30616"/>
    </ligand>
</feature>
<feature type="binding site" evidence="1">
    <location>
        <position position="8"/>
    </location>
    <ligand>
        <name>CTP</name>
        <dbReference type="ChEBI" id="CHEBI:37563"/>
    </ligand>
</feature>
<feature type="binding site" evidence="1">
    <location>
        <position position="11"/>
    </location>
    <ligand>
        <name>ATP</name>
        <dbReference type="ChEBI" id="CHEBI:30616"/>
    </ligand>
</feature>
<feature type="binding site" evidence="1">
    <location>
        <position position="11"/>
    </location>
    <ligand>
        <name>CTP</name>
        <dbReference type="ChEBI" id="CHEBI:37563"/>
    </ligand>
</feature>
<feature type="binding site" evidence="1">
    <location>
        <position position="21"/>
    </location>
    <ligand>
        <name>Mg(2+)</name>
        <dbReference type="ChEBI" id="CHEBI:18420"/>
    </ligand>
</feature>
<feature type="binding site" evidence="1">
    <location>
        <position position="23"/>
    </location>
    <ligand>
        <name>Mg(2+)</name>
        <dbReference type="ChEBI" id="CHEBI:18420"/>
    </ligand>
</feature>
<feature type="binding site" evidence="1">
    <location>
        <position position="91"/>
    </location>
    <ligand>
        <name>ATP</name>
        <dbReference type="ChEBI" id="CHEBI:30616"/>
    </ligand>
</feature>
<feature type="binding site" evidence="1">
    <location>
        <position position="91"/>
    </location>
    <ligand>
        <name>CTP</name>
        <dbReference type="ChEBI" id="CHEBI:37563"/>
    </ligand>
</feature>
<feature type="binding site" evidence="1">
    <location>
        <position position="143"/>
    </location>
    <ligand>
        <name>ATP</name>
        <dbReference type="ChEBI" id="CHEBI:30616"/>
    </ligand>
</feature>
<feature type="binding site" evidence="1">
    <location>
        <position position="143"/>
    </location>
    <ligand>
        <name>CTP</name>
        <dbReference type="ChEBI" id="CHEBI:37563"/>
    </ligand>
</feature>
<feature type="binding site" evidence="1">
    <location>
        <position position="146"/>
    </location>
    <ligand>
        <name>ATP</name>
        <dbReference type="ChEBI" id="CHEBI:30616"/>
    </ligand>
</feature>
<feature type="binding site" evidence="1">
    <location>
        <position position="146"/>
    </location>
    <ligand>
        <name>CTP</name>
        <dbReference type="ChEBI" id="CHEBI:37563"/>
    </ligand>
</feature>
<sequence length="413" mass="45561">MNIYAVGGAIRDALLGVPVQDRDYVVVGATPEQMAAQGFRPVGKDFPVFLHPDTQEEYALARTERKTAAGYHGFQFYYAPDVTLDEDLARRDLTINAMAREVSPDGTLIGPVIDPFDGQADLRARVFRHVSDAFVEDPVRILRIARFAARFADFTVADETLALMRRMVDAGEADALVPERVWQEIARGLMEATPSRMFDVLRECGALARVLPEVDALWGVPQRADYHPEVDTGVHVMMVVDYAAKQGYSLPVRFAALTHDLGKATTPADVLPRHVGHEGRSVELIKPLCERLRVPNECRDLALVVAREHGNLHRVMEMGAAALVRLFERSDALRKPARFAEMLQACESDARGRLGLDTQPYPQAERLRVALVAARSVDAGAIARGIGNDAMQIKDAVHRARIDAVKQALAIAE</sequence>
<name>CCA_BURVG</name>
<accession>A4JIK4</accession>
<protein>
    <recommendedName>
        <fullName evidence="1">Multifunctional CCA protein</fullName>
    </recommendedName>
    <domain>
        <recommendedName>
            <fullName evidence="1">CCA-adding enzyme</fullName>
            <ecNumber evidence="1">2.7.7.72</ecNumber>
        </recommendedName>
        <alternativeName>
            <fullName evidence="1">CCA tRNA nucleotidyltransferase</fullName>
        </alternativeName>
        <alternativeName>
            <fullName evidence="1">tRNA CCA-pyrophosphorylase</fullName>
        </alternativeName>
        <alternativeName>
            <fullName evidence="1">tRNA adenylyl-/cytidylyl-transferase</fullName>
        </alternativeName>
        <alternativeName>
            <fullName evidence="1">tRNA nucleotidyltransferase</fullName>
        </alternativeName>
        <alternativeName>
            <fullName evidence="1">tRNA-NT</fullName>
        </alternativeName>
    </domain>
    <domain>
        <recommendedName>
            <fullName evidence="1">2'-nucleotidase</fullName>
            <ecNumber evidence="1">3.1.3.-</ecNumber>
        </recommendedName>
    </domain>
    <domain>
        <recommendedName>
            <fullName evidence="1">2',3'-cyclic phosphodiesterase</fullName>
            <ecNumber evidence="1">3.1.4.-</ecNumber>
        </recommendedName>
    </domain>
    <domain>
        <recommendedName>
            <fullName evidence="1">Phosphatase</fullName>
            <ecNumber evidence="1">3.1.3.-</ecNumber>
        </recommendedName>
    </domain>
</protein>
<proteinExistence type="inferred from homology"/>
<reference key="1">
    <citation type="submission" date="2007-03" db="EMBL/GenBank/DDBJ databases">
        <title>Complete sequence of chromosome 1 of Burkholderia vietnamiensis G4.</title>
        <authorList>
            <consortium name="US DOE Joint Genome Institute"/>
            <person name="Copeland A."/>
            <person name="Lucas S."/>
            <person name="Lapidus A."/>
            <person name="Barry K."/>
            <person name="Detter J.C."/>
            <person name="Glavina del Rio T."/>
            <person name="Hammon N."/>
            <person name="Israni S."/>
            <person name="Dalin E."/>
            <person name="Tice H."/>
            <person name="Pitluck S."/>
            <person name="Chain P."/>
            <person name="Malfatti S."/>
            <person name="Shin M."/>
            <person name="Vergez L."/>
            <person name="Schmutz J."/>
            <person name="Larimer F."/>
            <person name="Land M."/>
            <person name="Hauser L."/>
            <person name="Kyrpides N."/>
            <person name="Tiedje J."/>
            <person name="Richardson P."/>
        </authorList>
    </citation>
    <scope>NUCLEOTIDE SEQUENCE [LARGE SCALE GENOMIC DNA]</scope>
    <source>
        <strain>G4 / LMG 22486</strain>
    </source>
</reference>
<dbReference type="EC" id="2.7.7.72" evidence="1"/>
<dbReference type="EC" id="3.1.3.-" evidence="1"/>
<dbReference type="EC" id="3.1.4.-" evidence="1"/>
<dbReference type="EMBL" id="CP000614">
    <property type="protein sequence ID" value="ABO56107.1"/>
    <property type="molecule type" value="Genomic_DNA"/>
</dbReference>
<dbReference type="SMR" id="A4JIK4"/>
<dbReference type="KEGG" id="bvi:Bcep1808_3116"/>
<dbReference type="eggNOG" id="COG0617">
    <property type="taxonomic scope" value="Bacteria"/>
</dbReference>
<dbReference type="HOGENOM" id="CLU_015961_1_1_4"/>
<dbReference type="Proteomes" id="UP000002287">
    <property type="component" value="Chromosome 1"/>
</dbReference>
<dbReference type="GO" id="GO:0005524">
    <property type="term" value="F:ATP binding"/>
    <property type="evidence" value="ECO:0007669"/>
    <property type="project" value="UniProtKB-UniRule"/>
</dbReference>
<dbReference type="GO" id="GO:0004810">
    <property type="term" value="F:CCA tRNA nucleotidyltransferase activity"/>
    <property type="evidence" value="ECO:0007669"/>
    <property type="project" value="UniProtKB-UniRule"/>
</dbReference>
<dbReference type="GO" id="GO:0004112">
    <property type="term" value="F:cyclic-nucleotide phosphodiesterase activity"/>
    <property type="evidence" value="ECO:0007669"/>
    <property type="project" value="UniProtKB-UniRule"/>
</dbReference>
<dbReference type="GO" id="GO:0000287">
    <property type="term" value="F:magnesium ion binding"/>
    <property type="evidence" value="ECO:0007669"/>
    <property type="project" value="UniProtKB-UniRule"/>
</dbReference>
<dbReference type="GO" id="GO:0016791">
    <property type="term" value="F:phosphatase activity"/>
    <property type="evidence" value="ECO:0007669"/>
    <property type="project" value="UniProtKB-UniRule"/>
</dbReference>
<dbReference type="GO" id="GO:0000049">
    <property type="term" value="F:tRNA binding"/>
    <property type="evidence" value="ECO:0007669"/>
    <property type="project" value="UniProtKB-UniRule"/>
</dbReference>
<dbReference type="GO" id="GO:0042245">
    <property type="term" value="P:RNA repair"/>
    <property type="evidence" value="ECO:0007669"/>
    <property type="project" value="UniProtKB-KW"/>
</dbReference>
<dbReference type="GO" id="GO:0001680">
    <property type="term" value="P:tRNA 3'-terminal CCA addition"/>
    <property type="evidence" value="ECO:0007669"/>
    <property type="project" value="UniProtKB-UniRule"/>
</dbReference>
<dbReference type="CDD" id="cd05398">
    <property type="entry name" value="NT_ClassII-CCAase"/>
    <property type="match status" value="1"/>
</dbReference>
<dbReference type="Gene3D" id="3.30.460.10">
    <property type="entry name" value="Beta Polymerase, domain 2"/>
    <property type="match status" value="1"/>
</dbReference>
<dbReference type="Gene3D" id="1.10.3090.10">
    <property type="entry name" value="cca-adding enzyme, domain 2"/>
    <property type="match status" value="1"/>
</dbReference>
<dbReference type="HAMAP" id="MF_01261">
    <property type="entry name" value="CCA_bact_type1"/>
    <property type="match status" value="1"/>
</dbReference>
<dbReference type="HAMAP" id="MF_01262">
    <property type="entry name" value="CCA_bact_type2"/>
    <property type="match status" value="1"/>
</dbReference>
<dbReference type="InterPro" id="IPR012006">
    <property type="entry name" value="CCA_bact"/>
</dbReference>
<dbReference type="InterPro" id="IPR006674">
    <property type="entry name" value="HD_domain"/>
</dbReference>
<dbReference type="InterPro" id="IPR043519">
    <property type="entry name" value="NT_sf"/>
</dbReference>
<dbReference type="InterPro" id="IPR002646">
    <property type="entry name" value="PolA_pol_head_dom"/>
</dbReference>
<dbReference type="InterPro" id="IPR032828">
    <property type="entry name" value="PolyA_RNA-bd"/>
</dbReference>
<dbReference type="InterPro" id="IPR050124">
    <property type="entry name" value="tRNA_CCA-adding_enzyme"/>
</dbReference>
<dbReference type="NCBIfam" id="NF008137">
    <property type="entry name" value="PRK10885.1"/>
    <property type="match status" value="1"/>
</dbReference>
<dbReference type="PANTHER" id="PTHR47545">
    <property type="entry name" value="MULTIFUNCTIONAL CCA PROTEIN"/>
    <property type="match status" value="1"/>
</dbReference>
<dbReference type="PANTHER" id="PTHR47545:SF1">
    <property type="entry name" value="MULTIFUNCTIONAL CCA PROTEIN"/>
    <property type="match status" value="1"/>
</dbReference>
<dbReference type="Pfam" id="PF01966">
    <property type="entry name" value="HD"/>
    <property type="match status" value="1"/>
</dbReference>
<dbReference type="Pfam" id="PF01743">
    <property type="entry name" value="PolyA_pol"/>
    <property type="match status" value="1"/>
</dbReference>
<dbReference type="Pfam" id="PF12627">
    <property type="entry name" value="PolyA_pol_RNAbd"/>
    <property type="match status" value="1"/>
</dbReference>
<dbReference type="PIRSF" id="PIRSF000813">
    <property type="entry name" value="CCA_bact"/>
    <property type="match status" value="1"/>
</dbReference>
<dbReference type="SUPFAM" id="SSF81301">
    <property type="entry name" value="Nucleotidyltransferase"/>
    <property type="match status" value="1"/>
</dbReference>
<dbReference type="SUPFAM" id="SSF81891">
    <property type="entry name" value="Poly A polymerase C-terminal region-like"/>
    <property type="match status" value="1"/>
</dbReference>
<dbReference type="PROSITE" id="PS51831">
    <property type="entry name" value="HD"/>
    <property type="match status" value="1"/>
</dbReference>
<gene>
    <name evidence="1" type="primary">cca</name>
    <name type="ordered locus">Bcep1808_3116</name>
</gene>